<dbReference type="EC" id="6.3.5.2" evidence="1"/>
<dbReference type="EMBL" id="CP000653">
    <property type="protein sequence ID" value="ABP61662.1"/>
    <property type="molecule type" value="Genomic_DNA"/>
</dbReference>
<dbReference type="RefSeq" id="WP_015959994.1">
    <property type="nucleotide sequence ID" value="NC_009436.1"/>
</dbReference>
<dbReference type="SMR" id="A4WD82"/>
<dbReference type="STRING" id="399742.Ent638_2998"/>
<dbReference type="MEROPS" id="C26.957"/>
<dbReference type="GeneID" id="93305942"/>
<dbReference type="KEGG" id="ent:Ent638_2998"/>
<dbReference type="eggNOG" id="COG0518">
    <property type="taxonomic scope" value="Bacteria"/>
</dbReference>
<dbReference type="eggNOG" id="COG0519">
    <property type="taxonomic scope" value="Bacteria"/>
</dbReference>
<dbReference type="HOGENOM" id="CLU_014340_0_5_6"/>
<dbReference type="OrthoDB" id="9802219at2"/>
<dbReference type="UniPathway" id="UPA00189">
    <property type="reaction ID" value="UER00296"/>
</dbReference>
<dbReference type="Proteomes" id="UP000000230">
    <property type="component" value="Chromosome"/>
</dbReference>
<dbReference type="GO" id="GO:0005829">
    <property type="term" value="C:cytosol"/>
    <property type="evidence" value="ECO:0007669"/>
    <property type="project" value="TreeGrafter"/>
</dbReference>
<dbReference type="GO" id="GO:0005524">
    <property type="term" value="F:ATP binding"/>
    <property type="evidence" value="ECO:0007669"/>
    <property type="project" value="UniProtKB-UniRule"/>
</dbReference>
<dbReference type="GO" id="GO:0003921">
    <property type="term" value="F:GMP synthase activity"/>
    <property type="evidence" value="ECO:0007669"/>
    <property type="project" value="InterPro"/>
</dbReference>
<dbReference type="CDD" id="cd01742">
    <property type="entry name" value="GATase1_GMP_Synthase"/>
    <property type="match status" value="1"/>
</dbReference>
<dbReference type="CDD" id="cd01997">
    <property type="entry name" value="GMP_synthase_C"/>
    <property type="match status" value="1"/>
</dbReference>
<dbReference type="FunFam" id="3.30.300.10:FF:000002">
    <property type="entry name" value="GMP synthase [glutamine-hydrolyzing]"/>
    <property type="match status" value="1"/>
</dbReference>
<dbReference type="FunFam" id="3.40.50.620:FF:000001">
    <property type="entry name" value="GMP synthase [glutamine-hydrolyzing]"/>
    <property type="match status" value="1"/>
</dbReference>
<dbReference type="FunFam" id="3.40.50.880:FF:000001">
    <property type="entry name" value="GMP synthase [glutamine-hydrolyzing]"/>
    <property type="match status" value="1"/>
</dbReference>
<dbReference type="Gene3D" id="3.30.300.10">
    <property type="match status" value="1"/>
</dbReference>
<dbReference type="Gene3D" id="3.40.50.880">
    <property type="match status" value="1"/>
</dbReference>
<dbReference type="Gene3D" id="3.40.50.620">
    <property type="entry name" value="HUPs"/>
    <property type="match status" value="1"/>
</dbReference>
<dbReference type="HAMAP" id="MF_00344">
    <property type="entry name" value="GMP_synthase"/>
    <property type="match status" value="1"/>
</dbReference>
<dbReference type="InterPro" id="IPR029062">
    <property type="entry name" value="Class_I_gatase-like"/>
</dbReference>
<dbReference type="InterPro" id="IPR017926">
    <property type="entry name" value="GATASE"/>
</dbReference>
<dbReference type="InterPro" id="IPR001674">
    <property type="entry name" value="GMP_synth_C"/>
</dbReference>
<dbReference type="InterPro" id="IPR004739">
    <property type="entry name" value="GMP_synth_GATase"/>
</dbReference>
<dbReference type="InterPro" id="IPR022955">
    <property type="entry name" value="GMP_synthase"/>
</dbReference>
<dbReference type="InterPro" id="IPR025777">
    <property type="entry name" value="GMPS_ATP_PPase_dom"/>
</dbReference>
<dbReference type="InterPro" id="IPR022310">
    <property type="entry name" value="NAD/GMP_synthase"/>
</dbReference>
<dbReference type="InterPro" id="IPR014729">
    <property type="entry name" value="Rossmann-like_a/b/a_fold"/>
</dbReference>
<dbReference type="NCBIfam" id="TIGR00884">
    <property type="entry name" value="guaA_Cterm"/>
    <property type="match status" value="1"/>
</dbReference>
<dbReference type="NCBIfam" id="TIGR00888">
    <property type="entry name" value="guaA_Nterm"/>
    <property type="match status" value="1"/>
</dbReference>
<dbReference type="NCBIfam" id="NF000848">
    <property type="entry name" value="PRK00074.1"/>
    <property type="match status" value="1"/>
</dbReference>
<dbReference type="PANTHER" id="PTHR11922:SF2">
    <property type="entry name" value="GMP SYNTHASE [GLUTAMINE-HYDROLYZING]"/>
    <property type="match status" value="1"/>
</dbReference>
<dbReference type="PANTHER" id="PTHR11922">
    <property type="entry name" value="GMP SYNTHASE-RELATED"/>
    <property type="match status" value="1"/>
</dbReference>
<dbReference type="Pfam" id="PF00117">
    <property type="entry name" value="GATase"/>
    <property type="match status" value="1"/>
</dbReference>
<dbReference type="Pfam" id="PF00958">
    <property type="entry name" value="GMP_synt_C"/>
    <property type="match status" value="1"/>
</dbReference>
<dbReference type="Pfam" id="PF02540">
    <property type="entry name" value="NAD_synthase"/>
    <property type="match status" value="1"/>
</dbReference>
<dbReference type="PRINTS" id="PR00097">
    <property type="entry name" value="ANTSNTHASEII"/>
</dbReference>
<dbReference type="PRINTS" id="PR00099">
    <property type="entry name" value="CPSGATASE"/>
</dbReference>
<dbReference type="PRINTS" id="PR00096">
    <property type="entry name" value="GATASE"/>
</dbReference>
<dbReference type="SUPFAM" id="SSF52402">
    <property type="entry name" value="Adenine nucleotide alpha hydrolases-like"/>
    <property type="match status" value="1"/>
</dbReference>
<dbReference type="SUPFAM" id="SSF52317">
    <property type="entry name" value="Class I glutamine amidotransferase-like"/>
    <property type="match status" value="1"/>
</dbReference>
<dbReference type="SUPFAM" id="SSF54810">
    <property type="entry name" value="GMP synthetase C-terminal dimerisation domain"/>
    <property type="match status" value="1"/>
</dbReference>
<dbReference type="PROSITE" id="PS51273">
    <property type="entry name" value="GATASE_TYPE_1"/>
    <property type="match status" value="1"/>
</dbReference>
<dbReference type="PROSITE" id="PS51553">
    <property type="entry name" value="GMPS_ATP_PPASE"/>
    <property type="match status" value="1"/>
</dbReference>
<protein>
    <recommendedName>
        <fullName evidence="1">GMP synthase [glutamine-hydrolyzing]</fullName>
        <ecNumber evidence="1">6.3.5.2</ecNumber>
    </recommendedName>
    <alternativeName>
        <fullName evidence="1">GMP synthetase</fullName>
    </alternativeName>
    <alternativeName>
        <fullName evidence="1">Glutamine amidotransferase</fullName>
    </alternativeName>
</protein>
<keyword id="KW-0067">ATP-binding</keyword>
<keyword id="KW-0315">Glutamine amidotransferase</keyword>
<keyword id="KW-0332">GMP biosynthesis</keyword>
<keyword id="KW-0436">Ligase</keyword>
<keyword id="KW-0547">Nucleotide-binding</keyword>
<keyword id="KW-0658">Purine biosynthesis</keyword>
<gene>
    <name evidence="1" type="primary">guaA</name>
    <name type="ordered locus">Ent638_2998</name>
</gene>
<accession>A4WD82</accession>
<name>GUAA_ENT38</name>
<proteinExistence type="inferred from homology"/>
<organism>
    <name type="scientific">Enterobacter sp. (strain 638)</name>
    <dbReference type="NCBI Taxonomy" id="399742"/>
    <lineage>
        <taxon>Bacteria</taxon>
        <taxon>Pseudomonadati</taxon>
        <taxon>Pseudomonadota</taxon>
        <taxon>Gammaproteobacteria</taxon>
        <taxon>Enterobacterales</taxon>
        <taxon>Enterobacteriaceae</taxon>
        <taxon>Enterobacter</taxon>
    </lineage>
</organism>
<feature type="chain" id="PRO_1000120294" description="GMP synthase [glutamine-hydrolyzing]">
    <location>
        <begin position="1"/>
        <end position="525"/>
    </location>
</feature>
<feature type="domain" description="Glutamine amidotransferase type-1" evidence="1">
    <location>
        <begin position="9"/>
        <end position="207"/>
    </location>
</feature>
<feature type="domain" description="GMPS ATP-PPase" evidence="1">
    <location>
        <begin position="208"/>
        <end position="400"/>
    </location>
</feature>
<feature type="active site" description="Nucleophile" evidence="1">
    <location>
        <position position="86"/>
    </location>
</feature>
<feature type="active site" evidence="1">
    <location>
        <position position="181"/>
    </location>
</feature>
<feature type="active site" evidence="1">
    <location>
        <position position="183"/>
    </location>
</feature>
<feature type="binding site" evidence="1">
    <location>
        <begin position="235"/>
        <end position="241"/>
    </location>
    <ligand>
        <name>ATP</name>
        <dbReference type="ChEBI" id="CHEBI:30616"/>
    </ligand>
</feature>
<evidence type="ECO:0000255" key="1">
    <source>
        <dbReference type="HAMAP-Rule" id="MF_00344"/>
    </source>
</evidence>
<comment type="function">
    <text evidence="1">Catalyzes the synthesis of GMP from XMP.</text>
</comment>
<comment type="catalytic activity">
    <reaction evidence="1">
        <text>XMP + L-glutamine + ATP + H2O = GMP + L-glutamate + AMP + diphosphate + 2 H(+)</text>
        <dbReference type="Rhea" id="RHEA:11680"/>
        <dbReference type="ChEBI" id="CHEBI:15377"/>
        <dbReference type="ChEBI" id="CHEBI:15378"/>
        <dbReference type="ChEBI" id="CHEBI:29985"/>
        <dbReference type="ChEBI" id="CHEBI:30616"/>
        <dbReference type="ChEBI" id="CHEBI:33019"/>
        <dbReference type="ChEBI" id="CHEBI:57464"/>
        <dbReference type="ChEBI" id="CHEBI:58115"/>
        <dbReference type="ChEBI" id="CHEBI:58359"/>
        <dbReference type="ChEBI" id="CHEBI:456215"/>
        <dbReference type="EC" id="6.3.5.2"/>
    </reaction>
</comment>
<comment type="pathway">
    <text evidence="1">Purine metabolism; GMP biosynthesis; GMP from XMP (L-Gln route): step 1/1.</text>
</comment>
<comment type="subunit">
    <text evidence="1">Homodimer.</text>
</comment>
<reference key="1">
    <citation type="journal article" date="2010" name="PLoS Genet.">
        <title>Genome sequence of the plant growth promoting endophytic bacterium Enterobacter sp. 638.</title>
        <authorList>
            <person name="Taghavi S."/>
            <person name="van der Lelie D."/>
            <person name="Hoffman A."/>
            <person name="Zhang Y.B."/>
            <person name="Walla M.D."/>
            <person name="Vangronsveld J."/>
            <person name="Newman L."/>
            <person name="Monchy S."/>
        </authorList>
    </citation>
    <scope>NUCLEOTIDE SEQUENCE [LARGE SCALE GENOMIC DNA]</scope>
    <source>
        <strain>638</strain>
    </source>
</reference>
<sequence>MTENIHKHRILILDFGSQYTQLVARRVRELGVYCELWAWDVTEAQIREFNPSGIILSGGPESTTEDNSPRAPQYVFEAGVPVFGVCYGMQTMAMQLGGHVEASNEREFGYAQVEVLTDSALVRGIEDSLTADGKPLLDVWMSHGDKVTAIPSDFVTVASTETCPFAIMANEEKRFYGVQFHPEVTHTRQGMRMLDRFVRDICQCEALWTPAKIIDDAIARIRQQVGDDKVILGLSGGVDSSVTAMLLHRAIGKNLTCVFVDNGLLRLNEAEQVMDMFGDHFGLNIVHVEGEERFLTALAGENDPEAKRKIIGRVFVEVFDEQALRLEDVKWLAQGTIYPDVIESAASATGKAHVIKSHHNVGGLPKEMKMGLVEPLRELFKDEVRKIGLELGLPYDMLYRHPFPGPGLGVRVLGEVKKEYCDLLRRADAIFIEELHKADLYNKVSQAFTVFLPVRSVGVMGDGRKYDWVVSLRAVETIDFMTAHWAHLPYDFLGRVSNRIINEVNGISRVVYDISGKPPATIEWE</sequence>